<reference key="1">
    <citation type="journal article" date="2002" name="Science">
        <title>The genome sequence of the malaria mosquito Anopheles gambiae.</title>
        <authorList>
            <person name="Holt R.A."/>
            <person name="Subramanian G.M."/>
            <person name="Halpern A."/>
            <person name="Sutton G.G."/>
            <person name="Charlab R."/>
            <person name="Nusskern D.R."/>
            <person name="Wincker P."/>
            <person name="Clark A.G."/>
            <person name="Ribeiro J.M.C."/>
            <person name="Wides R."/>
            <person name="Salzberg S.L."/>
            <person name="Loftus B.J."/>
            <person name="Yandell M.D."/>
            <person name="Majoros W.H."/>
            <person name="Rusch D.B."/>
            <person name="Lai Z."/>
            <person name="Kraft C.L."/>
            <person name="Abril J.F."/>
            <person name="Anthouard V."/>
            <person name="Arensburger P."/>
            <person name="Atkinson P.W."/>
            <person name="Baden H."/>
            <person name="de Berardinis V."/>
            <person name="Baldwin D."/>
            <person name="Benes V."/>
            <person name="Biedler J."/>
            <person name="Blass C."/>
            <person name="Bolanos R."/>
            <person name="Boscus D."/>
            <person name="Barnstead M."/>
            <person name="Cai S."/>
            <person name="Center A."/>
            <person name="Chaturverdi K."/>
            <person name="Christophides G.K."/>
            <person name="Chrystal M.A.M."/>
            <person name="Clamp M."/>
            <person name="Cravchik A."/>
            <person name="Curwen V."/>
            <person name="Dana A."/>
            <person name="Delcher A."/>
            <person name="Dew I."/>
            <person name="Evans C.A."/>
            <person name="Flanigan M."/>
            <person name="Grundschober-Freimoser A."/>
            <person name="Friedli L."/>
            <person name="Gu Z."/>
            <person name="Guan P."/>
            <person name="Guigo R."/>
            <person name="Hillenmeyer M.E."/>
            <person name="Hladun S.L."/>
            <person name="Hogan J.R."/>
            <person name="Hong Y.S."/>
            <person name="Hoover J."/>
            <person name="Jaillon O."/>
            <person name="Ke Z."/>
            <person name="Kodira C.D."/>
            <person name="Kokoza E."/>
            <person name="Koutsos A."/>
            <person name="Letunic I."/>
            <person name="Levitsky A.A."/>
            <person name="Liang Y."/>
            <person name="Lin J.-J."/>
            <person name="Lobo N.F."/>
            <person name="Lopez J.R."/>
            <person name="Malek J.A."/>
            <person name="McIntosh T.C."/>
            <person name="Meister S."/>
            <person name="Miller J.R."/>
            <person name="Mobarry C."/>
            <person name="Mongin E."/>
            <person name="Murphy S.D."/>
            <person name="O'Brochta D.A."/>
            <person name="Pfannkoch C."/>
            <person name="Qi R."/>
            <person name="Regier M.A."/>
            <person name="Remington K."/>
            <person name="Shao H."/>
            <person name="Sharakhova M.V."/>
            <person name="Sitter C.D."/>
            <person name="Shetty J."/>
            <person name="Smith T.J."/>
            <person name="Strong R."/>
            <person name="Sun J."/>
            <person name="Thomasova D."/>
            <person name="Ton L.Q."/>
            <person name="Topalis P."/>
            <person name="Tu Z.J."/>
            <person name="Unger M.F."/>
            <person name="Walenz B."/>
            <person name="Wang A.H."/>
            <person name="Wang J."/>
            <person name="Wang M."/>
            <person name="Wang X."/>
            <person name="Woodford K.J."/>
            <person name="Wortman J.R."/>
            <person name="Wu M."/>
            <person name="Yao A."/>
            <person name="Zdobnov E.M."/>
            <person name="Zhang H."/>
            <person name="Zhao Q."/>
            <person name="Zhao S."/>
            <person name="Zhu S.C."/>
            <person name="Zhimulev I."/>
            <person name="Coluzzi M."/>
            <person name="della Torre A."/>
            <person name="Roth C.W."/>
            <person name="Louis C."/>
            <person name="Kalush F."/>
            <person name="Mural R.J."/>
            <person name="Myers E.W."/>
            <person name="Adams M.D."/>
            <person name="Smith H.O."/>
            <person name="Broder S."/>
            <person name="Gardner M.J."/>
            <person name="Fraser C.M."/>
            <person name="Birney E."/>
            <person name="Bork P."/>
            <person name="Brey P.T."/>
            <person name="Venter J.C."/>
            <person name="Weissenbach J."/>
            <person name="Kafatos F.C."/>
            <person name="Collins F.H."/>
            <person name="Hoffman S.L."/>
        </authorList>
    </citation>
    <scope>NUCLEOTIDE SEQUENCE [LARGE SCALE GENOMIC DNA]</scope>
    <source>
        <strain>PEST</strain>
    </source>
</reference>
<keyword id="KW-0963">Cytoplasm</keyword>
<keyword id="KW-1185">Reference proteome</keyword>
<keyword id="KW-0694">RNA-binding</keyword>
<keyword id="KW-0808">Transferase</keyword>
<keyword id="KW-0819">tRNA processing</keyword>
<keyword id="KW-0820">tRNA-binding</keyword>
<gene>
    <name type="ORF">AGAP005220</name>
</gene>
<proteinExistence type="inferred from homology"/>
<feature type="chain" id="PRO_0000368240" description="Cytoplasmic tRNA 2-thiolation protein 1">
    <location>
        <begin position="1"/>
        <end position="342"/>
    </location>
</feature>
<sequence>MPVPCGSSCGRNAFMRRPKTGDTLCKECFFLAFETEIHNTIQQEQLFRPGEKVAIAASGGKDSTVLAHVMNLLNKRYNYGLDLVLLSIDEGITGYRDDSLKTVAQNRDDYGMPLRVLSYQELYGWTMDRIVAEIGRSNNCTFCGVFRRQALDRGARLMEVDCVATGHNADDIAETVIMNILRGDTARLRRCCDIKTGSKEADTIPRVKPLKYSYEKEIVMYAHFKKLVYFSTECVFAPNAYRGHARAFLKDLEKVRPSAIMDIIHAGEQLQIKGTVKKPVRGVCGRCGFVSSQQPCKACVLLEGLNRGLPKLGIGKKSKGERMVALQEQQLREKAHLVKNDF</sequence>
<comment type="function">
    <text evidence="1">Plays a central role in 2-thiolation of mcm(5)S(2)U at tRNA wobble positions of tRNA(Lys), tRNA(Glu) and tRNA(Gln). Directly binds tRNAs and probably acts by catalyzing adenylation of tRNAs, an intermediate required for 2-thiolation. It is unclear whether it acts as a sulfurtransferase that transfers sulfur from thiocarboxylated URM1 onto the uridine of tRNAs at wobble position.</text>
</comment>
<comment type="pathway">
    <text evidence="1">tRNA modification; 5-methoxycarbonylmethyl-2-thiouridine-tRNA biosynthesis.</text>
</comment>
<comment type="subcellular location">
    <subcellularLocation>
        <location evidence="1">Cytoplasm</location>
    </subcellularLocation>
</comment>
<comment type="similarity">
    <text evidence="1">Belongs to the TtcA family. CTU1/NCS6/ATPBD3 subfamily.</text>
</comment>
<dbReference type="EC" id="2.7.7.-" evidence="1"/>
<dbReference type="EMBL" id="AAAB01008900">
    <property type="protein sequence ID" value="EAA09344.3"/>
    <property type="molecule type" value="Genomic_DNA"/>
</dbReference>
<dbReference type="RefSeq" id="XP_314122.3">
    <property type="nucleotide sequence ID" value="XM_314122.4"/>
</dbReference>
<dbReference type="SMR" id="Q7Q9I4"/>
<dbReference type="FunCoup" id="Q7Q9I4">
    <property type="interactions" value="482"/>
</dbReference>
<dbReference type="STRING" id="7165.Q7Q9I4"/>
<dbReference type="PaxDb" id="7165-AGAP005220-PA"/>
<dbReference type="EnsemblMetazoa" id="AGAP005220-RA">
    <property type="protein sequence ID" value="AGAP005220-PA"/>
    <property type="gene ID" value="AGAP005220"/>
</dbReference>
<dbReference type="GeneID" id="1274928"/>
<dbReference type="KEGG" id="aga:1274928"/>
<dbReference type="CTD" id="90353"/>
<dbReference type="VEuPathDB" id="VectorBase:AGAMI1_000264"/>
<dbReference type="VEuPathDB" id="VectorBase:AGAP005220"/>
<dbReference type="eggNOG" id="KOG2840">
    <property type="taxonomic scope" value="Eukaryota"/>
</dbReference>
<dbReference type="HOGENOM" id="CLU_026481_1_2_1"/>
<dbReference type="InParanoid" id="Q7Q9I4"/>
<dbReference type="OMA" id="KPVRGIC"/>
<dbReference type="PhylomeDB" id="Q7Q9I4"/>
<dbReference type="UniPathway" id="UPA00988"/>
<dbReference type="Proteomes" id="UP000007062">
    <property type="component" value="Chromosome 2L"/>
</dbReference>
<dbReference type="GO" id="GO:0005829">
    <property type="term" value="C:cytosol"/>
    <property type="evidence" value="ECO:0000250"/>
    <property type="project" value="UniProtKB"/>
</dbReference>
<dbReference type="GO" id="GO:0002144">
    <property type="term" value="C:cytosolic tRNA wobble base thiouridylase complex"/>
    <property type="evidence" value="ECO:0000318"/>
    <property type="project" value="GO_Central"/>
</dbReference>
<dbReference type="GO" id="GO:0016779">
    <property type="term" value="F:nucleotidyltransferase activity"/>
    <property type="evidence" value="ECO:0007669"/>
    <property type="project" value="UniProtKB-UniRule"/>
</dbReference>
<dbReference type="GO" id="GO:0000049">
    <property type="term" value="F:tRNA binding"/>
    <property type="evidence" value="ECO:0000250"/>
    <property type="project" value="UniProtKB"/>
</dbReference>
<dbReference type="GO" id="GO:0032447">
    <property type="term" value="P:protein urmylation"/>
    <property type="evidence" value="ECO:0007669"/>
    <property type="project" value="UniProtKB-UniRule"/>
</dbReference>
<dbReference type="GO" id="GO:0034227">
    <property type="term" value="P:tRNA thio-modification"/>
    <property type="evidence" value="ECO:0000250"/>
    <property type="project" value="UniProtKB"/>
</dbReference>
<dbReference type="GO" id="GO:0002143">
    <property type="term" value="P:tRNA wobble position uridine thiolation"/>
    <property type="evidence" value="ECO:0000318"/>
    <property type="project" value="GO_Central"/>
</dbReference>
<dbReference type="GO" id="GO:0002098">
    <property type="term" value="P:tRNA wobble uridine modification"/>
    <property type="evidence" value="ECO:0000250"/>
    <property type="project" value="UniProtKB"/>
</dbReference>
<dbReference type="CDD" id="cd01713">
    <property type="entry name" value="CTU1-like"/>
    <property type="match status" value="1"/>
</dbReference>
<dbReference type="FunFam" id="3.40.50.620:FF:000054">
    <property type="entry name" value="Cytoplasmic tRNA 2-thiolation protein 1"/>
    <property type="match status" value="1"/>
</dbReference>
<dbReference type="Gene3D" id="3.40.50.620">
    <property type="entry name" value="HUPs"/>
    <property type="match status" value="1"/>
</dbReference>
<dbReference type="HAMAP" id="MF_03053">
    <property type="entry name" value="CTU1"/>
    <property type="match status" value="1"/>
</dbReference>
<dbReference type="InterPro" id="IPR056369">
    <property type="entry name" value="CTU1-like_ATP-bd"/>
</dbReference>
<dbReference type="InterPro" id="IPR032442">
    <property type="entry name" value="CTU1_C"/>
</dbReference>
<dbReference type="InterPro" id="IPR000541">
    <property type="entry name" value="Ncs6/Tuc1/Ctu1"/>
</dbReference>
<dbReference type="InterPro" id="IPR014729">
    <property type="entry name" value="Rossmann-like_a/b/a_fold"/>
</dbReference>
<dbReference type="InterPro" id="IPR011063">
    <property type="entry name" value="TilS/TtcA_N"/>
</dbReference>
<dbReference type="InterPro" id="IPR035107">
    <property type="entry name" value="tRNA_thiolation_TtcA_Ctu1"/>
</dbReference>
<dbReference type="InterPro" id="IPR020554">
    <property type="entry name" value="UPF0021_CS"/>
</dbReference>
<dbReference type="NCBIfam" id="TIGR00269">
    <property type="entry name" value="TIGR00269 family protein"/>
    <property type="match status" value="1"/>
</dbReference>
<dbReference type="PANTHER" id="PTHR11807">
    <property type="entry name" value="ATPASES OF THE PP SUPERFAMILY-RELATED"/>
    <property type="match status" value="1"/>
</dbReference>
<dbReference type="PANTHER" id="PTHR11807:SF12">
    <property type="entry name" value="CYTOPLASMIC TRNA 2-THIOLATION PROTEIN 1"/>
    <property type="match status" value="1"/>
</dbReference>
<dbReference type="Pfam" id="PF01171">
    <property type="entry name" value="ATP_bind_3"/>
    <property type="match status" value="1"/>
</dbReference>
<dbReference type="Pfam" id="PF16503">
    <property type="entry name" value="zn-ribbon_14"/>
    <property type="match status" value="1"/>
</dbReference>
<dbReference type="PIRSF" id="PIRSF004976">
    <property type="entry name" value="ATPase_YdaO"/>
    <property type="match status" value="1"/>
</dbReference>
<dbReference type="SUPFAM" id="SSF52402">
    <property type="entry name" value="Adenine nucleotide alpha hydrolases-like"/>
    <property type="match status" value="1"/>
</dbReference>
<dbReference type="PROSITE" id="PS01263">
    <property type="entry name" value="UPF0021"/>
    <property type="match status" value="1"/>
</dbReference>
<accession>Q7Q9I4</accession>
<protein>
    <recommendedName>
        <fullName evidence="1">Cytoplasmic tRNA 2-thiolation protein 1</fullName>
        <ecNumber evidence="1">2.7.7.-</ecNumber>
    </recommendedName>
    <alternativeName>
        <fullName evidence="1">Cytoplasmic tRNA adenylyltransferase 1</fullName>
    </alternativeName>
</protein>
<evidence type="ECO:0000255" key="1">
    <source>
        <dbReference type="HAMAP-Rule" id="MF_03053"/>
    </source>
</evidence>
<name>CTU1_ANOGA</name>
<organism>
    <name type="scientific">Anopheles gambiae</name>
    <name type="common">African malaria mosquito</name>
    <dbReference type="NCBI Taxonomy" id="7165"/>
    <lineage>
        <taxon>Eukaryota</taxon>
        <taxon>Metazoa</taxon>
        <taxon>Ecdysozoa</taxon>
        <taxon>Arthropoda</taxon>
        <taxon>Hexapoda</taxon>
        <taxon>Insecta</taxon>
        <taxon>Pterygota</taxon>
        <taxon>Neoptera</taxon>
        <taxon>Endopterygota</taxon>
        <taxon>Diptera</taxon>
        <taxon>Nematocera</taxon>
        <taxon>Culicoidea</taxon>
        <taxon>Culicidae</taxon>
        <taxon>Anophelinae</taxon>
        <taxon>Anopheles</taxon>
    </lineage>
</organism>